<accession>O65413</accession>
<accession>F4JJJ2</accession>
<keyword id="KW-0472">Membrane</keyword>
<keyword id="KW-1185">Reference proteome</keyword>
<keyword id="KW-0762">Sugar transport</keyword>
<keyword id="KW-0769">Symport</keyword>
<keyword id="KW-0812">Transmembrane</keyword>
<keyword id="KW-1133">Transmembrane helix</keyword>
<keyword id="KW-0813">Transport</keyword>
<evidence type="ECO:0000250" key="1"/>
<evidence type="ECO:0000255" key="2"/>
<evidence type="ECO:0000305" key="3"/>
<protein>
    <recommendedName>
        <fullName>Sugar transport protein 12</fullName>
    </recommendedName>
    <alternativeName>
        <fullName>Hexose transporter 12</fullName>
    </alternativeName>
</protein>
<sequence>MPSVGIVIGDGKKEYPGKLTLYVTVTCIVAAMGGLIFGYDIGISGGVTTMDSFQQKFFPSVYEKQKKDHDSNQYCRFDSVSLTLFTSSLYLAALCSSLVASYVTRQFGRKISMLLGGVLFCAGALLNGFATAVWMLIVGRLLLGFGIGFTNQSVPLYLSEMAPYKYRGALNIGFQLSITIGILVANVLNFFFSKISWGWRLSLGGAVVPALIITVGSLILPDTPNSMIERGQFRLAEAKLRKIRGVDDIDDEINDLIIASEASKLVEHPWRNLLQRKYRPHLTMAILIPAFQQLTGINVIMFYAPVLFQTIGFGSDAALISAVVTGLVNVGATVVSIYGVDKWGRRFLFLEGGFQMLISQVAVAAAIGAKFGVDGTPGVLPKWYAIVVVLFICIYVAAFAWSWGPLGWLVPSEIFPLEIRSAAQSITVSVNMIFTFLIAQVFLMMLCHLKFGLFIFFAFFVVVMSIFVYLFLPETRGVPIEEMNRVWRSHWYWSKFVDAEKNLTKVVI</sequence>
<feature type="chain" id="PRO_0000050442" description="Sugar transport protein 12">
    <location>
        <begin position="1"/>
        <end position="508"/>
    </location>
</feature>
<feature type="topological domain" description="Cytoplasmic" evidence="2">
    <location>
        <begin position="1"/>
        <end position="22"/>
    </location>
</feature>
<feature type="transmembrane region" description="Helical; Name=1" evidence="2">
    <location>
        <begin position="23"/>
        <end position="43"/>
    </location>
</feature>
<feature type="transmembrane region" description="Helical; Name=2" evidence="2">
    <location>
        <begin position="80"/>
        <end position="100"/>
    </location>
</feature>
<feature type="transmembrane region" description="Helical; Name=3" evidence="2">
    <location>
        <begin position="118"/>
        <end position="138"/>
    </location>
</feature>
<feature type="transmembrane region" description="Helical; Name=4" evidence="2">
    <location>
        <begin position="141"/>
        <end position="161"/>
    </location>
</feature>
<feature type="transmembrane region" description="Helical; Name=5" evidence="2">
    <location>
        <begin position="172"/>
        <end position="192"/>
    </location>
</feature>
<feature type="transmembrane region" description="Helical; Name=6" evidence="2">
    <location>
        <begin position="201"/>
        <end position="221"/>
    </location>
</feature>
<feature type="transmembrane region" description="Helical; Name=7" evidence="2">
    <location>
        <begin position="294"/>
        <end position="314"/>
    </location>
</feature>
<feature type="transmembrane region" description="Helical; Name=8" evidence="2">
    <location>
        <begin position="317"/>
        <end position="337"/>
    </location>
</feature>
<feature type="transmembrane region" description="Helical; Name=9" evidence="2">
    <location>
        <begin position="347"/>
        <end position="367"/>
    </location>
</feature>
<feature type="transmembrane region" description="Helical; Name=10" evidence="2">
    <location>
        <begin position="383"/>
        <end position="403"/>
    </location>
</feature>
<feature type="transmembrane region" description="Helical; Name=11" evidence="2">
    <location>
        <begin position="426"/>
        <end position="446"/>
    </location>
</feature>
<feature type="transmembrane region" description="Helical; Name=12" evidence="2">
    <location>
        <begin position="451"/>
        <end position="471"/>
    </location>
</feature>
<feature type="topological domain" description="Cytoplasmic" evidence="2">
    <location>
        <begin position="472"/>
        <end position="508"/>
    </location>
</feature>
<reference key="1">
    <citation type="submission" date="2001-09" db="EMBL/GenBank/DDBJ databases">
        <title>STP12, a new Arabidopsis monosaccharide transporter.</title>
        <authorList>
            <person name="Buettner M."/>
        </authorList>
    </citation>
    <scope>NUCLEOTIDE SEQUENCE [MRNA]</scope>
</reference>
<reference key="2">
    <citation type="journal article" date="1999" name="Nature">
        <title>Sequence and analysis of chromosome 4 of the plant Arabidopsis thaliana.</title>
        <authorList>
            <person name="Mayer K.F.X."/>
            <person name="Schueller C."/>
            <person name="Wambutt R."/>
            <person name="Murphy G."/>
            <person name="Volckaert G."/>
            <person name="Pohl T."/>
            <person name="Duesterhoeft A."/>
            <person name="Stiekema W."/>
            <person name="Entian K.-D."/>
            <person name="Terryn N."/>
            <person name="Harris B."/>
            <person name="Ansorge W."/>
            <person name="Brandt P."/>
            <person name="Grivell L.A."/>
            <person name="Rieger M."/>
            <person name="Weichselgartner M."/>
            <person name="de Simone V."/>
            <person name="Obermaier B."/>
            <person name="Mache R."/>
            <person name="Mueller M."/>
            <person name="Kreis M."/>
            <person name="Delseny M."/>
            <person name="Puigdomenech P."/>
            <person name="Watson M."/>
            <person name="Schmidtheini T."/>
            <person name="Reichert B."/>
            <person name="Portetelle D."/>
            <person name="Perez-Alonso M."/>
            <person name="Boutry M."/>
            <person name="Bancroft I."/>
            <person name="Vos P."/>
            <person name="Hoheisel J."/>
            <person name="Zimmermann W."/>
            <person name="Wedler H."/>
            <person name="Ridley P."/>
            <person name="Langham S.-A."/>
            <person name="McCullagh B."/>
            <person name="Bilham L."/>
            <person name="Robben J."/>
            <person name="van der Schueren J."/>
            <person name="Grymonprez B."/>
            <person name="Chuang Y.-J."/>
            <person name="Vandenbussche F."/>
            <person name="Braeken M."/>
            <person name="Weltjens I."/>
            <person name="Voet M."/>
            <person name="Bastiaens I."/>
            <person name="Aert R."/>
            <person name="Defoor E."/>
            <person name="Weitzenegger T."/>
            <person name="Bothe G."/>
            <person name="Ramsperger U."/>
            <person name="Hilbert H."/>
            <person name="Braun M."/>
            <person name="Holzer E."/>
            <person name="Brandt A."/>
            <person name="Peters S."/>
            <person name="van Staveren M."/>
            <person name="Dirkse W."/>
            <person name="Mooijman P."/>
            <person name="Klein Lankhorst R."/>
            <person name="Rose M."/>
            <person name="Hauf J."/>
            <person name="Koetter P."/>
            <person name="Berneiser S."/>
            <person name="Hempel S."/>
            <person name="Feldpausch M."/>
            <person name="Lamberth S."/>
            <person name="Van den Daele H."/>
            <person name="De Keyser A."/>
            <person name="Buysshaert C."/>
            <person name="Gielen J."/>
            <person name="Villarroel R."/>
            <person name="De Clercq R."/>
            <person name="van Montagu M."/>
            <person name="Rogers J."/>
            <person name="Cronin A."/>
            <person name="Quail M.A."/>
            <person name="Bray-Allen S."/>
            <person name="Clark L."/>
            <person name="Doggett J."/>
            <person name="Hall S."/>
            <person name="Kay M."/>
            <person name="Lennard N."/>
            <person name="McLay K."/>
            <person name="Mayes R."/>
            <person name="Pettett A."/>
            <person name="Rajandream M.A."/>
            <person name="Lyne M."/>
            <person name="Benes V."/>
            <person name="Rechmann S."/>
            <person name="Borkova D."/>
            <person name="Bloecker H."/>
            <person name="Scharfe M."/>
            <person name="Grimm M."/>
            <person name="Loehnert T.-H."/>
            <person name="Dose S."/>
            <person name="de Haan M."/>
            <person name="Maarse A.C."/>
            <person name="Schaefer M."/>
            <person name="Mueller-Auer S."/>
            <person name="Gabel C."/>
            <person name="Fuchs M."/>
            <person name="Fartmann B."/>
            <person name="Granderath K."/>
            <person name="Dauner D."/>
            <person name="Herzl A."/>
            <person name="Neumann S."/>
            <person name="Argiriou A."/>
            <person name="Vitale D."/>
            <person name="Liguori R."/>
            <person name="Piravandi E."/>
            <person name="Massenet O."/>
            <person name="Quigley F."/>
            <person name="Clabauld G."/>
            <person name="Muendlein A."/>
            <person name="Felber R."/>
            <person name="Schnabl S."/>
            <person name="Hiller R."/>
            <person name="Schmidt W."/>
            <person name="Lecharny A."/>
            <person name="Aubourg S."/>
            <person name="Chefdor F."/>
            <person name="Cooke R."/>
            <person name="Berger C."/>
            <person name="Monfort A."/>
            <person name="Casacuberta E."/>
            <person name="Gibbons T."/>
            <person name="Weber N."/>
            <person name="Vandenbol M."/>
            <person name="Bargues M."/>
            <person name="Terol J."/>
            <person name="Torres A."/>
            <person name="Perez-Perez A."/>
            <person name="Purnelle B."/>
            <person name="Bent E."/>
            <person name="Johnson S."/>
            <person name="Tacon D."/>
            <person name="Jesse T."/>
            <person name="Heijnen L."/>
            <person name="Schwarz S."/>
            <person name="Scholler P."/>
            <person name="Heber S."/>
            <person name="Francs P."/>
            <person name="Bielke C."/>
            <person name="Frishman D."/>
            <person name="Haase D."/>
            <person name="Lemcke K."/>
            <person name="Mewes H.-W."/>
            <person name="Stocker S."/>
            <person name="Zaccaria P."/>
            <person name="Bevan M."/>
            <person name="Wilson R.K."/>
            <person name="de la Bastide M."/>
            <person name="Habermann K."/>
            <person name="Parnell L."/>
            <person name="Dedhia N."/>
            <person name="Gnoj L."/>
            <person name="Schutz K."/>
            <person name="Huang E."/>
            <person name="Spiegel L."/>
            <person name="Sekhon M."/>
            <person name="Murray J."/>
            <person name="Sheet P."/>
            <person name="Cordes M."/>
            <person name="Abu-Threideh J."/>
            <person name="Stoneking T."/>
            <person name="Kalicki J."/>
            <person name="Graves T."/>
            <person name="Harmon G."/>
            <person name="Edwards J."/>
            <person name="Latreille P."/>
            <person name="Courtney L."/>
            <person name="Cloud J."/>
            <person name="Abbott A."/>
            <person name="Scott K."/>
            <person name="Johnson D."/>
            <person name="Minx P."/>
            <person name="Bentley D."/>
            <person name="Fulton B."/>
            <person name="Miller N."/>
            <person name="Greco T."/>
            <person name="Kemp K."/>
            <person name="Kramer J."/>
            <person name="Fulton L."/>
            <person name="Mardis E."/>
            <person name="Dante M."/>
            <person name="Pepin K."/>
            <person name="Hillier L.W."/>
            <person name="Nelson J."/>
            <person name="Spieth J."/>
            <person name="Ryan E."/>
            <person name="Andrews S."/>
            <person name="Geisel C."/>
            <person name="Layman D."/>
            <person name="Du H."/>
            <person name="Ali J."/>
            <person name="Berghoff A."/>
            <person name="Jones K."/>
            <person name="Drone K."/>
            <person name="Cotton M."/>
            <person name="Joshu C."/>
            <person name="Antonoiu B."/>
            <person name="Zidanic M."/>
            <person name="Strong C."/>
            <person name="Sun H."/>
            <person name="Lamar B."/>
            <person name="Yordan C."/>
            <person name="Ma P."/>
            <person name="Zhong J."/>
            <person name="Preston R."/>
            <person name="Vil D."/>
            <person name="Shekher M."/>
            <person name="Matero A."/>
            <person name="Shah R."/>
            <person name="Swaby I.K."/>
            <person name="O'Shaughnessy A."/>
            <person name="Rodriguez M."/>
            <person name="Hoffman J."/>
            <person name="Till S."/>
            <person name="Granat S."/>
            <person name="Shohdy N."/>
            <person name="Hasegawa A."/>
            <person name="Hameed A."/>
            <person name="Lodhi M."/>
            <person name="Johnson A."/>
            <person name="Chen E."/>
            <person name="Marra M.A."/>
            <person name="Martienssen R."/>
            <person name="McCombie W.R."/>
        </authorList>
    </citation>
    <scope>NUCLEOTIDE SEQUENCE [LARGE SCALE GENOMIC DNA]</scope>
    <source>
        <strain>cv. Columbia</strain>
    </source>
</reference>
<reference key="3">
    <citation type="journal article" date="2017" name="Plant J.">
        <title>Araport11: a complete reannotation of the Arabidopsis thaliana reference genome.</title>
        <authorList>
            <person name="Cheng C.Y."/>
            <person name="Krishnakumar V."/>
            <person name="Chan A.P."/>
            <person name="Thibaud-Nissen F."/>
            <person name="Schobel S."/>
            <person name="Town C.D."/>
        </authorList>
    </citation>
    <scope>GENOME REANNOTATION</scope>
    <source>
        <strain>cv. Columbia</strain>
    </source>
</reference>
<reference key="4">
    <citation type="journal article" date="2006" name="BMC Evol. Biol.">
        <title>The monosaccharide transporter gene family in land plants is ancient and shows differential subfamily expression and expansion across lineages.</title>
        <authorList>
            <person name="Johnson D.A."/>
            <person name="Hill J.P."/>
            <person name="Thomas M.A."/>
        </authorList>
    </citation>
    <scope>GENE FAMILY</scope>
</reference>
<organism>
    <name type="scientific">Arabidopsis thaliana</name>
    <name type="common">Mouse-ear cress</name>
    <dbReference type="NCBI Taxonomy" id="3702"/>
    <lineage>
        <taxon>Eukaryota</taxon>
        <taxon>Viridiplantae</taxon>
        <taxon>Streptophyta</taxon>
        <taxon>Embryophyta</taxon>
        <taxon>Tracheophyta</taxon>
        <taxon>Spermatophyta</taxon>
        <taxon>Magnoliopsida</taxon>
        <taxon>eudicotyledons</taxon>
        <taxon>Gunneridae</taxon>
        <taxon>Pentapetalae</taxon>
        <taxon>rosids</taxon>
        <taxon>malvids</taxon>
        <taxon>Brassicales</taxon>
        <taxon>Brassicaceae</taxon>
        <taxon>Camelineae</taxon>
        <taxon>Arabidopsis</taxon>
    </lineage>
</organism>
<dbReference type="EMBL" id="AJ344333">
    <property type="protein sequence ID" value="CAC69069.1"/>
    <property type="molecule type" value="mRNA"/>
</dbReference>
<dbReference type="EMBL" id="AL022603">
    <property type="protein sequence ID" value="CAA18712.1"/>
    <property type="molecule type" value="Genomic_DNA"/>
</dbReference>
<dbReference type="EMBL" id="AL161555">
    <property type="protein sequence ID" value="CAB81255.1"/>
    <property type="molecule type" value="Genomic_DNA"/>
</dbReference>
<dbReference type="EMBL" id="CP002687">
    <property type="protein sequence ID" value="AEE84458.1"/>
    <property type="status" value="ALT_FRAME"/>
    <property type="molecule type" value="Genomic_DNA"/>
</dbReference>
<dbReference type="PIR" id="T05156">
    <property type="entry name" value="T05156"/>
</dbReference>
<dbReference type="RefSeq" id="NP_193879.4">
    <property type="nucleotide sequence ID" value="NM_118268.4"/>
</dbReference>
<dbReference type="SMR" id="O65413"/>
<dbReference type="FunCoup" id="O65413">
    <property type="interactions" value="180"/>
</dbReference>
<dbReference type="STRING" id="3702.O65413"/>
<dbReference type="GlyGen" id="O65413">
    <property type="glycosylation" value="1 site"/>
</dbReference>
<dbReference type="PaxDb" id="3702-AT4G21480.1"/>
<dbReference type="ProteomicsDB" id="228358"/>
<dbReference type="GeneID" id="828233"/>
<dbReference type="KEGG" id="ath:AT4G21480"/>
<dbReference type="Araport" id="AT4G21480"/>
<dbReference type="TAIR" id="AT4G21480">
    <property type="gene designation" value="STP12"/>
</dbReference>
<dbReference type="eggNOG" id="KOG0254">
    <property type="taxonomic scope" value="Eukaryota"/>
</dbReference>
<dbReference type="HOGENOM" id="CLU_001265_30_5_1"/>
<dbReference type="InParanoid" id="O65413"/>
<dbReference type="OrthoDB" id="5296287at2759"/>
<dbReference type="PhylomeDB" id="O65413"/>
<dbReference type="PRO" id="PR:O65413"/>
<dbReference type="Proteomes" id="UP000006548">
    <property type="component" value="Chromosome 4"/>
</dbReference>
<dbReference type="ExpressionAtlas" id="O65413">
    <property type="expression patterns" value="baseline and differential"/>
</dbReference>
<dbReference type="GO" id="GO:0016020">
    <property type="term" value="C:membrane"/>
    <property type="evidence" value="ECO:0007669"/>
    <property type="project" value="UniProtKB-SubCell"/>
</dbReference>
<dbReference type="GO" id="GO:0015145">
    <property type="term" value="F:monosaccharide transmembrane transporter activity"/>
    <property type="evidence" value="ECO:0007669"/>
    <property type="project" value="InterPro"/>
</dbReference>
<dbReference type="GO" id="GO:0015293">
    <property type="term" value="F:symporter activity"/>
    <property type="evidence" value="ECO:0007669"/>
    <property type="project" value="UniProtKB-KW"/>
</dbReference>
<dbReference type="CDD" id="cd17361">
    <property type="entry name" value="MFS_STP"/>
    <property type="match status" value="1"/>
</dbReference>
<dbReference type="FunFam" id="1.20.1250.20:FF:000002">
    <property type="entry name" value="Sugar transport protein 13"/>
    <property type="match status" value="1"/>
</dbReference>
<dbReference type="Gene3D" id="1.20.1250.20">
    <property type="entry name" value="MFS general substrate transporter like domains"/>
    <property type="match status" value="1"/>
</dbReference>
<dbReference type="InterPro" id="IPR020846">
    <property type="entry name" value="MFS_dom"/>
</dbReference>
<dbReference type="InterPro" id="IPR044778">
    <property type="entry name" value="MFS_STP/MST-like_plant"/>
</dbReference>
<dbReference type="InterPro" id="IPR005828">
    <property type="entry name" value="MFS_sugar_transport-like"/>
</dbReference>
<dbReference type="InterPro" id="IPR036259">
    <property type="entry name" value="MFS_trans_sf"/>
</dbReference>
<dbReference type="InterPro" id="IPR045262">
    <property type="entry name" value="STP/PLT_plant"/>
</dbReference>
<dbReference type="InterPro" id="IPR003663">
    <property type="entry name" value="Sugar/inositol_transpt"/>
</dbReference>
<dbReference type="InterPro" id="IPR005829">
    <property type="entry name" value="Sugar_transporter_CS"/>
</dbReference>
<dbReference type="NCBIfam" id="TIGR00879">
    <property type="entry name" value="SP"/>
    <property type="match status" value="1"/>
</dbReference>
<dbReference type="PANTHER" id="PTHR23500">
    <property type="entry name" value="SOLUTE CARRIER FAMILY 2, FACILITATED GLUCOSE TRANSPORTER"/>
    <property type="match status" value="1"/>
</dbReference>
<dbReference type="PANTHER" id="PTHR23500:SF596">
    <property type="entry name" value="SUGAR TRANSPORT PROTEIN 12"/>
    <property type="match status" value="1"/>
</dbReference>
<dbReference type="Pfam" id="PF00083">
    <property type="entry name" value="Sugar_tr"/>
    <property type="match status" value="1"/>
</dbReference>
<dbReference type="PRINTS" id="PR00171">
    <property type="entry name" value="SUGRTRNSPORT"/>
</dbReference>
<dbReference type="SUPFAM" id="SSF103473">
    <property type="entry name" value="MFS general substrate transporter"/>
    <property type="match status" value="1"/>
</dbReference>
<dbReference type="PROSITE" id="PS50850">
    <property type="entry name" value="MFS"/>
    <property type="match status" value="1"/>
</dbReference>
<dbReference type="PROSITE" id="PS00216">
    <property type="entry name" value="SUGAR_TRANSPORT_1"/>
    <property type="match status" value="1"/>
</dbReference>
<dbReference type="PROSITE" id="PS00217">
    <property type="entry name" value="SUGAR_TRANSPORT_2"/>
    <property type="match status" value="1"/>
</dbReference>
<gene>
    <name type="primary">STP12</name>
    <name type="ordered locus">At4g21480</name>
    <name type="ORF">F18E5.100</name>
</gene>
<proteinExistence type="evidence at transcript level"/>
<comment type="function">
    <text evidence="1">Mediates an active uptake of hexoses, probably by sugar/hydrogen symport.</text>
</comment>
<comment type="subcellular location">
    <subcellularLocation>
        <location>Membrane</location>
        <topology>Multi-pass membrane protein</topology>
    </subcellularLocation>
</comment>
<comment type="similarity">
    <text evidence="3">Belongs to the major facilitator superfamily. Sugar transporter (TC 2.A.1.1) family.</text>
</comment>
<comment type="sequence caution" evidence="3">
    <conflict type="frameshift">
        <sequence resource="EMBL-CDS" id="AEE84458"/>
    </conflict>
</comment>
<name>STP12_ARATH</name>